<keyword id="KW-1185">Reference proteome</keyword>
<keyword id="KW-0711">Selenium</keyword>
<keyword id="KW-0808">Transferase</keyword>
<feature type="chain" id="PRO_0000292709" description="tRNA 2-selenouridine synthase">
    <location>
        <begin position="1"/>
        <end position="367"/>
    </location>
</feature>
<feature type="domain" description="Rhodanese" evidence="1">
    <location>
        <begin position="15"/>
        <end position="138"/>
    </location>
</feature>
<feature type="active site" description="S-selanylcysteine intermediate" evidence="1">
    <location>
        <position position="98"/>
    </location>
</feature>
<reference key="1">
    <citation type="submission" date="2006-03" db="EMBL/GenBank/DDBJ databases">
        <title>Complete sequence of Shewanella denitrificans OS217.</title>
        <authorList>
            <consortium name="US DOE Joint Genome Institute"/>
            <person name="Copeland A."/>
            <person name="Lucas S."/>
            <person name="Lapidus A."/>
            <person name="Barry K."/>
            <person name="Detter J.C."/>
            <person name="Glavina del Rio T."/>
            <person name="Hammon N."/>
            <person name="Israni S."/>
            <person name="Dalin E."/>
            <person name="Tice H."/>
            <person name="Pitluck S."/>
            <person name="Brettin T."/>
            <person name="Bruce D."/>
            <person name="Han C."/>
            <person name="Tapia R."/>
            <person name="Gilna P."/>
            <person name="Kiss H."/>
            <person name="Schmutz J."/>
            <person name="Larimer F."/>
            <person name="Land M."/>
            <person name="Hauser L."/>
            <person name="Kyrpides N."/>
            <person name="Lykidis A."/>
            <person name="Richardson P."/>
        </authorList>
    </citation>
    <scope>NUCLEOTIDE SEQUENCE [LARGE SCALE GENOMIC DNA]</scope>
    <source>
        <strain>OS217 / ATCC BAA-1090 / DSM 15013</strain>
    </source>
</reference>
<comment type="function">
    <text evidence="1">Involved in the post-transcriptional modification of the uridine at the wobble position (U34) of tRNA(Lys), tRNA(Glu) and tRNA(Gln). Catalyzes the conversion of 2-thiouridine (S2U-RNA) to 2-selenouridine (Se2U-RNA). Acts in a two-step process involving geranylation of 2-thiouridine (S2U) to S-geranyl-2-thiouridine (geS2U) and subsequent selenation of the latter derivative to 2-selenouridine (Se2U) in the tRNA chain.</text>
</comment>
<comment type="catalytic activity">
    <reaction evidence="1">
        <text>5-methylaminomethyl-2-thiouridine(34) in tRNA + selenophosphate + (2E)-geranyl diphosphate + H2O + H(+) = 5-methylaminomethyl-2-selenouridine(34) in tRNA + (2E)-thiogeraniol + phosphate + diphosphate</text>
        <dbReference type="Rhea" id="RHEA:42716"/>
        <dbReference type="Rhea" id="RHEA-COMP:10195"/>
        <dbReference type="Rhea" id="RHEA-COMP:10196"/>
        <dbReference type="ChEBI" id="CHEBI:15377"/>
        <dbReference type="ChEBI" id="CHEBI:15378"/>
        <dbReference type="ChEBI" id="CHEBI:16144"/>
        <dbReference type="ChEBI" id="CHEBI:33019"/>
        <dbReference type="ChEBI" id="CHEBI:43474"/>
        <dbReference type="ChEBI" id="CHEBI:58057"/>
        <dbReference type="ChEBI" id="CHEBI:74455"/>
        <dbReference type="ChEBI" id="CHEBI:82743"/>
        <dbReference type="ChEBI" id="CHEBI:143703"/>
        <dbReference type="EC" id="2.9.1.3"/>
    </reaction>
    <physiologicalReaction direction="left-to-right" evidence="1">
        <dbReference type="Rhea" id="RHEA:42717"/>
    </physiologicalReaction>
</comment>
<comment type="catalytic activity">
    <reaction evidence="1">
        <text>5-methylaminomethyl-2-thiouridine(34) in tRNA + (2E)-geranyl diphosphate = 5-methylaminomethyl-S-(2E)-geranyl-thiouridine(34) in tRNA + diphosphate</text>
        <dbReference type="Rhea" id="RHEA:14085"/>
        <dbReference type="Rhea" id="RHEA-COMP:10195"/>
        <dbReference type="Rhea" id="RHEA-COMP:14654"/>
        <dbReference type="ChEBI" id="CHEBI:33019"/>
        <dbReference type="ChEBI" id="CHEBI:58057"/>
        <dbReference type="ChEBI" id="CHEBI:74455"/>
        <dbReference type="ChEBI" id="CHEBI:140632"/>
    </reaction>
    <physiologicalReaction direction="left-to-right" evidence="1">
        <dbReference type="Rhea" id="RHEA:14086"/>
    </physiologicalReaction>
</comment>
<comment type="catalytic activity">
    <reaction evidence="1">
        <text>5-methylaminomethyl-S-(2E)-geranyl-thiouridine(34) in tRNA + selenophosphate + H(+) = 5-methylaminomethyl-2-(Se-phospho)selenouridine(34) in tRNA + (2E)-thiogeraniol</text>
        <dbReference type="Rhea" id="RHEA:60172"/>
        <dbReference type="Rhea" id="RHEA-COMP:14654"/>
        <dbReference type="Rhea" id="RHEA-COMP:15523"/>
        <dbReference type="ChEBI" id="CHEBI:15378"/>
        <dbReference type="ChEBI" id="CHEBI:16144"/>
        <dbReference type="ChEBI" id="CHEBI:140632"/>
        <dbReference type="ChEBI" id="CHEBI:143702"/>
        <dbReference type="ChEBI" id="CHEBI:143703"/>
    </reaction>
    <physiologicalReaction direction="left-to-right" evidence="1">
        <dbReference type="Rhea" id="RHEA:60173"/>
    </physiologicalReaction>
</comment>
<comment type="catalytic activity">
    <reaction evidence="1">
        <text>5-methylaminomethyl-2-(Se-phospho)selenouridine(34) in tRNA + H2O = 5-methylaminomethyl-2-selenouridine(34) in tRNA + phosphate</text>
        <dbReference type="Rhea" id="RHEA:60176"/>
        <dbReference type="Rhea" id="RHEA-COMP:10196"/>
        <dbReference type="Rhea" id="RHEA-COMP:15523"/>
        <dbReference type="ChEBI" id="CHEBI:15377"/>
        <dbReference type="ChEBI" id="CHEBI:43474"/>
        <dbReference type="ChEBI" id="CHEBI:82743"/>
        <dbReference type="ChEBI" id="CHEBI:143702"/>
    </reaction>
    <physiologicalReaction direction="left-to-right" evidence="1">
        <dbReference type="Rhea" id="RHEA:60177"/>
    </physiologicalReaction>
</comment>
<comment type="subunit">
    <text evidence="1">Monomer.</text>
</comment>
<comment type="similarity">
    <text evidence="1">Belongs to the SelU family.</text>
</comment>
<protein>
    <recommendedName>
        <fullName evidence="1">tRNA 2-selenouridine synthase</fullName>
        <ecNumber evidence="1">2.9.1.3</ecNumber>
    </recommendedName>
</protein>
<gene>
    <name evidence="1" type="primary">selU</name>
    <name type="ordered locus">Sden_0227</name>
</gene>
<proteinExistence type="inferred from homology"/>
<accession>Q12SQ2</accession>
<sequence length="367" mass="41584">MTRQIIPSSEFASLFLQARPLIDVRAPIEFTKGAFPSAINLPLMKDSEREKVGTCYKQQGQESAIKLGHALVSGTVKEQRIAAWRKAIEANPSSYLYCFRGGLRSQLSQQWIKEAGFDIPYIQGGYKALRTFLIQILESSAALNSMLILSGRTGSGKTDFLQLRDEAVDLEQLANHRGSSFGKNLDPQPSQINFENQLAIAVLQHQTKHHRHLLLEDESFLIGRSALPKAFYNSMQHADIVLLEEDDEQRLQRLLFDYVDNKLASFVSRLGDEAGLKAFGDYLNASLNGIKKRLGGKFLQELLDSVARALAHQISQNDTSLHLDWISQLLTRYYDPMYDYQLSQKQQRVLFKGDHASMHAWLDELRK</sequence>
<evidence type="ECO:0000255" key="1">
    <source>
        <dbReference type="HAMAP-Rule" id="MF_01622"/>
    </source>
</evidence>
<name>SELU_SHEDO</name>
<dbReference type="EC" id="2.9.1.3" evidence="1"/>
<dbReference type="EMBL" id="CP000302">
    <property type="protein sequence ID" value="ABE53524.1"/>
    <property type="molecule type" value="Genomic_DNA"/>
</dbReference>
<dbReference type="RefSeq" id="WP_011494691.1">
    <property type="nucleotide sequence ID" value="NC_007954.1"/>
</dbReference>
<dbReference type="SMR" id="Q12SQ2"/>
<dbReference type="STRING" id="318161.Sden_0227"/>
<dbReference type="KEGG" id="sdn:Sden_0227"/>
<dbReference type="eggNOG" id="COG2603">
    <property type="taxonomic scope" value="Bacteria"/>
</dbReference>
<dbReference type="HOGENOM" id="CLU_043456_1_0_6"/>
<dbReference type="OrthoDB" id="9808735at2"/>
<dbReference type="Proteomes" id="UP000001982">
    <property type="component" value="Chromosome"/>
</dbReference>
<dbReference type="GO" id="GO:0016765">
    <property type="term" value="F:transferase activity, transferring alkyl or aryl (other than methyl) groups"/>
    <property type="evidence" value="ECO:0007669"/>
    <property type="project" value="UniProtKB-UniRule"/>
</dbReference>
<dbReference type="GO" id="GO:0043828">
    <property type="term" value="F:tRNA 2-selenouridine synthase activity"/>
    <property type="evidence" value="ECO:0007669"/>
    <property type="project" value="UniProtKB-EC"/>
</dbReference>
<dbReference type="GO" id="GO:0002098">
    <property type="term" value="P:tRNA wobble uridine modification"/>
    <property type="evidence" value="ECO:0007669"/>
    <property type="project" value="UniProtKB-UniRule"/>
</dbReference>
<dbReference type="CDD" id="cd01520">
    <property type="entry name" value="RHOD_YbbB"/>
    <property type="match status" value="1"/>
</dbReference>
<dbReference type="Gene3D" id="3.40.250.10">
    <property type="entry name" value="Rhodanese-like domain"/>
    <property type="match status" value="1"/>
</dbReference>
<dbReference type="HAMAP" id="MF_01622">
    <property type="entry name" value="tRNA_sel_U_synth"/>
    <property type="match status" value="1"/>
</dbReference>
<dbReference type="InterPro" id="IPR001763">
    <property type="entry name" value="Rhodanese-like_dom"/>
</dbReference>
<dbReference type="InterPro" id="IPR036873">
    <property type="entry name" value="Rhodanese-like_dom_sf"/>
</dbReference>
<dbReference type="InterPro" id="IPR017582">
    <property type="entry name" value="SelU"/>
</dbReference>
<dbReference type="NCBIfam" id="NF008750">
    <property type="entry name" value="PRK11784.1-2"/>
    <property type="match status" value="1"/>
</dbReference>
<dbReference type="NCBIfam" id="NF008751">
    <property type="entry name" value="PRK11784.1-3"/>
    <property type="match status" value="1"/>
</dbReference>
<dbReference type="NCBIfam" id="TIGR03167">
    <property type="entry name" value="tRNA_sel_U_synt"/>
    <property type="match status" value="1"/>
</dbReference>
<dbReference type="PANTHER" id="PTHR30401">
    <property type="entry name" value="TRNA 2-SELENOURIDINE SYNTHASE"/>
    <property type="match status" value="1"/>
</dbReference>
<dbReference type="PANTHER" id="PTHR30401:SF0">
    <property type="entry name" value="TRNA 2-SELENOURIDINE SYNTHASE"/>
    <property type="match status" value="1"/>
</dbReference>
<dbReference type="Pfam" id="PF00581">
    <property type="entry name" value="Rhodanese"/>
    <property type="match status" value="1"/>
</dbReference>
<dbReference type="SMART" id="SM00450">
    <property type="entry name" value="RHOD"/>
    <property type="match status" value="1"/>
</dbReference>
<dbReference type="SUPFAM" id="SSF52821">
    <property type="entry name" value="Rhodanese/Cell cycle control phosphatase"/>
    <property type="match status" value="1"/>
</dbReference>
<dbReference type="PROSITE" id="PS50206">
    <property type="entry name" value="RHODANESE_3"/>
    <property type="match status" value="1"/>
</dbReference>
<organism>
    <name type="scientific">Shewanella denitrificans (strain OS217 / ATCC BAA-1090 / DSM 15013)</name>
    <dbReference type="NCBI Taxonomy" id="318161"/>
    <lineage>
        <taxon>Bacteria</taxon>
        <taxon>Pseudomonadati</taxon>
        <taxon>Pseudomonadota</taxon>
        <taxon>Gammaproteobacteria</taxon>
        <taxon>Alteromonadales</taxon>
        <taxon>Shewanellaceae</taxon>
        <taxon>Shewanella</taxon>
    </lineage>
</organism>